<organism>
    <name type="scientific">Escherichia coli (strain 55989 / EAEC)</name>
    <dbReference type="NCBI Taxonomy" id="585055"/>
    <lineage>
        <taxon>Bacteria</taxon>
        <taxon>Pseudomonadati</taxon>
        <taxon>Pseudomonadota</taxon>
        <taxon>Gammaproteobacteria</taxon>
        <taxon>Enterobacterales</taxon>
        <taxon>Enterobacteriaceae</taxon>
        <taxon>Escherichia</taxon>
    </lineage>
</organism>
<feature type="chain" id="PRO_1000124414" description="Diaminopimelate epimerase">
    <location>
        <begin position="1"/>
        <end position="274"/>
    </location>
</feature>
<feature type="active site" description="Proton donor" evidence="1">
    <location>
        <position position="73"/>
    </location>
</feature>
<feature type="active site" description="Proton acceptor" evidence="1">
    <location>
        <position position="217"/>
    </location>
</feature>
<feature type="binding site" evidence="1">
    <location>
        <position position="11"/>
    </location>
    <ligand>
        <name>substrate</name>
    </ligand>
</feature>
<feature type="binding site" evidence="1">
    <location>
        <position position="44"/>
    </location>
    <ligand>
        <name>substrate</name>
    </ligand>
</feature>
<feature type="binding site" evidence="1">
    <location>
        <position position="64"/>
    </location>
    <ligand>
        <name>substrate</name>
    </ligand>
</feature>
<feature type="binding site" evidence="1">
    <location>
        <begin position="74"/>
        <end position="75"/>
    </location>
    <ligand>
        <name>substrate</name>
    </ligand>
</feature>
<feature type="binding site" evidence="1">
    <location>
        <position position="157"/>
    </location>
    <ligand>
        <name>substrate</name>
    </ligand>
</feature>
<feature type="binding site" evidence="1">
    <location>
        <position position="190"/>
    </location>
    <ligand>
        <name>substrate</name>
    </ligand>
</feature>
<feature type="binding site" evidence="1">
    <location>
        <begin position="208"/>
        <end position="209"/>
    </location>
    <ligand>
        <name>substrate</name>
    </ligand>
</feature>
<feature type="binding site" evidence="1">
    <location>
        <begin position="218"/>
        <end position="219"/>
    </location>
    <ligand>
        <name>substrate</name>
    </ligand>
</feature>
<feature type="site" description="Could be important to modulate the pK values of the two catalytic cysteine residues" evidence="1">
    <location>
        <position position="159"/>
    </location>
</feature>
<feature type="site" description="Could be important to modulate the pK values of the two catalytic cysteine residues" evidence="1">
    <location>
        <position position="208"/>
    </location>
</feature>
<feature type="site" description="Important for dimerization" evidence="1">
    <location>
        <position position="268"/>
    </location>
</feature>
<gene>
    <name evidence="1" type="primary">dapF</name>
    <name type="ordered locus">EC55989_4283</name>
</gene>
<proteinExistence type="inferred from homology"/>
<dbReference type="EC" id="5.1.1.7" evidence="1"/>
<dbReference type="EMBL" id="CU928145">
    <property type="protein sequence ID" value="CAV00935.1"/>
    <property type="molecule type" value="Genomic_DNA"/>
</dbReference>
<dbReference type="RefSeq" id="WP_001160654.1">
    <property type="nucleotide sequence ID" value="NC_011748.1"/>
</dbReference>
<dbReference type="SMR" id="B7L969"/>
<dbReference type="GeneID" id="93778134"/>
<dbReference type="KEGG" id="eck:EC55989_4283"/>
<dbReference type="HOGENOM" id="CLU_053306_1_1_6"/>
<dbReference type="UniPathway" id="UPA00034">
    <property type="reaction ID" value="UER00025"/>
</dbReference>
<dbReference type="Proteomes" id="UP000000746">
    <property type="component" value="Chromosome"/>
</dbReference>
<dbReference type="GO" id="GO:0005829">
    <property type="term" value="C:cytosol"/>
    <property type="evidence" value="ECO:0007669"/>
    <property type="project" value="TreeGrafter"/>
</dbReference>
<dbReference type="GO" id="GO:0008837">
    <property type="term" value="F:diaminopimelate epimerase activity"/>
    <property type="evidence" value="ECO:0007669"/>
    <property type="project" value="UniProtKB-UniRule"/>
</dbReference>
<dbReference type="GO" id="GO:0009089">
    <property type="term" value="P:lysine biosynthetic process via diaminopimelate"/>
    <property type="evidence" value="ECO:0007669"/>
    <property type="project" value="UniProtKB-UniRule"/>
</dbReference>
<dbReference type="FunFam" id="3.10.310.10:FF:000001">
    <property type="entry name" value="Diaminopimelate epimerase"/>
    <property type="match status" value="1"/>
</dbReference>
<dbReference type="FunFam" id="3.10.310.10:FF:000002">
    <property type="entry name" value="Diaminopimelate epimerase"/>
    <property type="match status" value="1"/>
</dbReference>
<dbReference type="Gene3D" id="3.10.310.10">
    <property type="entry name" value="Diaminopimelate Epimerase, Chain A, domain 1"/>
    <property type="match status" value="2"/>
</dbReference>
<dbReference type="HAMAP" id="MF_00197">
    <property type="entry name" value="DAP_epimerase"/>
    <property type="match status" value="1"/>
</dbReference>
<dbReference type="InterPro" id="IPR018510">
    <property type="entry name" value="DAP_epimerase_AS"/>
</dbReference>
<dbReference type="InterPro" id="IPR001653">
    <property type="entry name" value="DAP_epimerase_DapF"/>
</dbReference>
<dbReference type="NCBIfam" id="TIGR00652">
    <property type="entry name" value="DapF"/>
    <property type="match status" value="1"/>
</dbReference>
<dbReference type="PANTHER" id="PTHR31689:SF0">
    <property type="entry name" value="DIAMINOPIMELATE EPIMERASE"/>
    <property type="match status" value="1"/>
</dbReference>
<dbReference type="PANTHER" id="PTHR31689">
    <property type="entry name" value="DIAMINOPIMELATE EPIMERASE, CHLOROPLASTIC"/>
    <property type="match status" value="1"/>
</dbReference>
<dbReference type="Pfam" id="PF01678">
    <property type="entry name" value="DAP_epimerase"/>
    <property type="match status" value="2"/>
</dbReference>
<dbReference type="SUPFAM" id="SSF54506">
    <property type="entry name" value="Diaminopimelate epimerase-like"/>
    <property type="match status" value="1"/>
</dbReference>
<dbReference type="PROSITE" id="PS01326">
    <property type="entry name" value="DAP_EPIMERASE"/>
    <property type="match status" value="1"/>
</dbReference>
<sequence>MQFSKMHGLGNDFMVVDAVTQNVFFSPELIRRLADRHLGVGFDQLLVVEPPYDPELDFHYRIFNADGSEVAQCGNGARCFARFVRLKGLTNKRDIRVSTANGRMVLTVTDDDLVRVNMGEPNFEPSAVPFRANKAEKTYIMRAAEQTILCGVVSMGNPHCVIQVDDVDTAAVETLGPVLESHERFPERANIGFMQVVKREHIRLRVYERGAGETQACGSGACAAVAVGIQQGLLAEEVRVELPGGRLDIAWKGPGHPLYMTGPAVHVYDGFIHL</sequence>
<keyword id="KW-0028">Amino-acid biosynthesis</keyword>
<keyword id="KW-0963">Cytoplasm</keyword>
<keyword id="KW-0413">Isomerase</keyword>
<keyword id="KW-0457">Lysine biosynthesis</keyword>
<keyword id="KW-1185">Reference proteome</keyword>
<comment type="function">
    <text evidence="1">Catalyzes the stereoinversion of LL-2,6-diaminopimelate (L,L-DAP) to meso-diaminopimelate (meso-DAP), a precursor of L-lysine and an essential component of the bacterial peptidoglycan.</text>
</comment>
<comment type="catalytic activity">
    <reaction evidence="1">
        <text>(2S,6S)-2,6-diaminopimelate = meso-2,6-diaminopimelate</text>
        <dbReference type="Rhea" id="RHEA:15393"/>
        <dbReference type="ChEBI" id="CHEBI:57609"/>
        <dbReference type="ChEBI" id="CHEBI:57791"/>
        <dbReference type="EC" id="5.1.1.7"/>
    </reaction>
</comment>
<comment type="pathway">
    <text evidence="1">Amino-acid biosynthesis; L-lysine biosynthesis via DAP pathway; DL-2,6-diaminopimelate from LL-2,6-diaminopimelate: step 1/1.</text>
</comment>
<comment type="subunit">
    <text evidence="1">Homodimer.</text>
</comment>
<comment type="subcellular location">
    <subcellularLocation>
        <location evidence="1">Cytoplasm</location>
    </subcellularLocation>
</comment>
<comment type="similarity">
    <text evidence="1">Belongs to the diaminopimelate epimerase family.</text>
</comment>
<protein>
    <recommendedName>
        <fullName evidence="1">Diaminopimelate epimerase</fullName>
        <shortName evidence="1">DAP epimerase</shortName>
        <ecNumber evidence="1">5.1.1.7</ecNumber>
    </recommendedName>
    <alternativeName>
        <fullName evidence="1">PLP-independent amino acid racemase</fullName>
    </alternativeName>
</protein>
<evidence type="ECO:0000255" key="1">
    <source>
        <dbReference type="HAMAP-Rule" id="MF_00197"/>
    </source>
</evidence>
<accession>B7L969</accession>
<reference key="1">
    <citation type="journal article" date="2009" name="PLoS Genet.">
        <title>Organised genome dynamics in the Escherichia coli species results in highly diverse adaptive paths.</title>
        <authorList>
            <person name="Touchon M."/>
            <person name="Hoede C."/>
            <person name="Tenaillon O."/>
            <person name="Barbe V."/>
            <person name="Baeriswyl S."/>
            <person name="Bidet P."/>
            <person name="Bingen E."/>
            <person name="Bonacorsi S."/>
            <person name="Bouchier C."/>
            <person name="Bouvet O."/>
            <person name="Calteau A."/>
            <person name="Chiapello H."/>
            <person name="Clermont O."/>
            <person name="Cruveiller S."/>
            <person name="Danchin A."/>
            <person name="Diard M."/>
            <person name="Dossat C."/>
            <person name="Karoui M.E."/>
            <person name="Frapy E."/>
            <person name="Garry L."/>
            <person name="Ghigo J.M."/>
            <person name="Gilles A.M."/>
            <person name="Johnson J."/>
            <person name="Le Bouguenec C."/>
            <person name="Lescat M."/>
            <person name="Mangenot S."/>
            <person name="Martinez-Jehanne V."/>
            <person name="Matic I."/>
            <person name="Nassif X."/>
            <person name="Oztas S."/>
            <person name="Petit M.A."/>
            <person name="Pichon C."/>
            <person name="Rouy Z."/>
            <person name="Ruf C.S."/>
            <person name="Schneider D."/>
            <person name="Tourret J."/>
            <person name="Vacherie B."/>
            <person name="Vallenet D."/>
            <person name="Medigue C."/>
            <person name="Rocha E.P.C."/>
            <person name="Denamur E."/>
        </authorList>
    </citation>
    <scope>NUCLEOTIDE SEQUENCE [LARGE SCALE GENOMIC DNA]</scope>
    <source>
        <strain>55989 / EAEC</strain>
    </source>
</reference>
<name>DAPF_ECO55</name>